<organism>
    <name type="scientific">Daucus carota</name>
    <name type="common">Wild carrot</name>
    <dbReference type="NCBI Taxonomy" id="4039"/>
    <lineage>
        <taxon>Eukaryota</taxon>
        <taxon>Viridiplantae</taxon>
        <taxon>Streptophyta</taxon>
        <taxon>Embryophyta</taxon>
        <taxon>Tracheophyta</taxon>
        <taxon>Spermatophyta</taxon>
        <taxon>Magnoliopsida</taxon>
        <taxon>eudicotyledons</taxon>
        <taxon>Gunneridae</taxon>
        <taxon>Pentapetalae</taxon>
        <taxon>asterids</taxon>
        <taxon>campanulids</taxon>
        <taxon>Apiales</taxon>
        <taxon>Apiaceae</taxon>
        <taxon>Apioideae</taxon>
        <taxon>Scandiceae</taxon>
        <taxon>Daucinae</taxon>
        <taxon>Daucus</taxon>
        <taxon>Daucus sect. Daucus</taxon>
    </lineage>
</organism>
<reference evidence="1" key="1">
    <citation type="submission" date="2008-07" db="UniProtKB">
        <authorList>
            <person name="Almagro L."/>
            <person name="Belchi-Navarro S."/>
            <person name="Casado-Vela J."/>
            <person name="Pedreno M.A."/>
        </authorList>
    </citation>
    <scope>PROTEIN SEQUENCE</scope>
</reference>
<feature type="chain" id="PRO_0000355610" description="Unknown protein 4">
    <location>
        <begin position="1" status="less than"/>
        <end position="17" status="greater than"/>
    </location>
</feature>
<feature type="unsure residue" description="L or I">
    <location>
        <position position="3"/>
    </location>
</feature>
<feature type="unsure residue" description="L or I">
    <location>
        <position position="5"/>
    </location>
</feature>
<feature type="unsure residue" description="F or M">
    <location>
        <position position="8"/>
    </location>
</feature>
<feature type="unsure residue" description="Q or K">
    <location>
        <position position="10"/>
    </location>
</feature>
<feature type="unsure residue" description="K or Q">
    <location>
        <position position="17"/>
    </location>
</feature>
<feature type="non-terminal residue">
    <location>
        <position position="1"/>
    </location>
</feature>
<feature type="non-terminal residue">
    <location>
        <position position="17"/>
    </location>
</feature>
<name>UP04_DAUCA</name>
<keyword id="KW-0903">Direct protein sequencing</keyword>
<accession>P86065</accession>
<sequence>ESLPLAAFHQVDVYTAK</sequence>
<protein>
    <recommendedName>
        <fullName>Unknown protein 4</fullName>
    </recommendedName>
</protein>
<evidence type="ECO:0000305" key="1"/>
<proteinExistence type="evidence at protein level"/>